<accession>Q9Z6T7</accession>
<accession>Q7AI02</accession>
<accession>Q7DE54</accession>
<accession>Q7VPR9</accession>
<comment type="function">
    <text evidence="1">Involved in targeting and insertion of nascent membrane proteins into the cytoplasmic membrane. Acts as a receptor for the complex formed by the signal recognition particle (SRP) and the ribosome-nascent chain (RNC).</text>
</comment>
<comment type="catalytic activity">
    <reaction evidence="1">
        <text>GTP + H2O = GDP + phosphate + H(+)</text>
        <dbReference type="Rhea" id="RHEA:19669"/>
        <dbReference type="ChEBI" id="CHEBI:15377"/>
        <dbReference type="ChEBI" id="CHEBI:15378"/>
        <dbReference type="ChEBI" id="CHEBI:37565"/>
        <dbReference type="ChEBI" id="CHEBI:43474"/>
        <dbReference type="ChEBI" id="CHEBI:58189"/>
        <dbReference type="EC" id="3.6.5.4"/>
    </reaction>
</comment>
<comment type="subunit">
    <text evidence="1">Part of the signal recognition particle protein translocation system, which is composed of SRP and FtsY.</text>
</comment>
<comment type="subcellular location">
    <subcellularLocation>
        <location>Cell inner membrane</location>
        <topology>Peripheral membrane protein</topology>
        <orientation>Cytoplasmic side</orientation>
    </subcellularLocation>
    <subcellularLocation>
        <location evidence="1">Cytoplasm</location>
    </subcellularLocation>
</comment>
<comment type="similarity">
    <text evidence="1">Belongs to the GTP-binding SRP family. FtsY subfamily.</text>
</comment>
<name>FTSY_CHLPN</name>
<proteinExistence type="inferred from homology"/>
<reference key="1">
    <citation type="journal article" date="1999" name="Nat. Genet.">
        <title>Comparative genomes of Chlamydia pneumoniae and C. trachomatis.</title>
        <authorList>
            <person name="Kalman S."/>
            <person name="Mitchell W.P."/>
            <person name="Marathe R."/>
            <person name="Lammel C.J."/>
            <person name="Fan J."/>
            <person name="Hyman R.W."/>
            <person name="Olinger L."/>
            <person name="Grimwood J."/>
            <person name="Davis R.W."/>
            <person name="Stephens R.S."/>
        </authorList>
    </citation>
    <scope>NUCLEOTIDE SEQUENCE [LARGE SCALE GENOMIC DNA]</scope>
    <source>
        <strain>CWL029</strain>
    </source>
</reference>
<reference key="2">
    <citation type="journal article" date="2000" name="Nucleic Acids Res.">
        <title>Genome sequences of Chlamydia trachomatis MoPn and Chlamydia pneumoniae AR39.</title>
        <authorList>
            <person name="Read T.D."/>
            <person name="Brunham R.C."/>
            <person name="Shen C."/>
            <person name="Gill S.R."/>
            <person name="Heidelberg J.F."/>
            <person name="White O."/>
            <person name="Hickey E.K."/>
            <person name="Peterson J.D."/>
            <person name="Utterback T.R."/>
            <person name="Berry K.J."/>
            <person name="Bass S."/>
            <person name="Linher K.D."/>
            <person name="Weidman J.F."/>
            <person name="Khouri H.M."/>
            <person name="Craven B."/>
            <person name="Bowman C."/>
            <person name="Dodson R.J."/>
            <person name="Gwinn M.L."/>
            <person name="Nelson W.C."/>
            <person name="DeBoy R.T."/>
            <person name="Kolonay J.F."/>
            <person name="McClarty G."/>
            <person name="Salzberg S.L."/>
            <person name="Eisen J.A."/>
            <person name="Fraser C.M."/>
        </authorList>
    </citation>
    <scope>NUCLEOTIDE SEQUENCE [LARGE SCALE GENOMIC DNA]</scope>
    <source>
        <strain>AR39</strain>
    </source>
</reference>
<reference key="3">
    <citation type="journal article" date="2000" name="Nucleic Acids Res.">
        <title>Comparison of whole genome sequences of Chlamydia pneumoniae J138 from Japan and CWL029 from USA.</title>
        <authorList>
            <person name="Shirai M."/>
            <person name="Hirakawa H."/>
            <person name="Kimoto M."/>
            <person name="Tabuchi M."/>
            <person name="Kishi F."/>
            <person name="Ouchi K."/>
            <person name="Shiba T."/>
            <person name="Ishii K."/>
            <person name="Hattori M."/>
            <person name="Kuhara S."/>
            <person name="Nakazawa T."/>
        </authorList>
    </citation>
    <scope>NUCLEOTIDE SEQUENCE [LARGE SCALE GENOMIC DNA]</scope>
    <source>
        <strain>J138</strain>
    </source>
</reference>
<reference key="4">
    <citation type="submission" date="2002-05" db="EMBL/GenBank/DDBJ databases">
        <title>The genome sequence of Chlamydia pneumoniae TW183 and comparison with other Chlamydia strains based on whole genome sequence analysis.</title>
        <authorList>
            <person name="Geng M.M."/>
            <person name="Schuhmacher A."/>
            <person name="Muehldorfer I."/>
            <person name="Bensch K.W."/>
            <person name="Schaefer K.P."/>
            <person name="Schneider S."/>
            <person name="Pohl T."/>
            <person name="Essig A."/>
            <person name="Marre R."/>
            <person name="Melchers K."/>
        </authorList>
    </citation>
    <scope>NUCLEOTIDE SEQUENCE [LARGE SCALE GENOMIC DNA]</scope>
    <source>
        <strain>TW-183</strain>
    </source>
</reference>
<sequence>MFKFFRNKLQSLFKKNISLDLIEDAESLFYEADFGTELTEELCARLRRTKKADASTIKDLITVLLRESLEGLPSQASQSSQTRPIVSLLLGTNGSGKTTTAAKLAHYYKERSESVMLVATDTFRAAGMDQARLWANELGCGFVSGQPGGDAAAIAFDGIQSAIARGYSRVIIDTSGRLHVHGNLMKELSKIVSVCGKALEGAPHEIFMTVDSTLGNNAIEQVRVFHDVVPLSGLIFTKVDGSAKGGTLFQIAKRLKIPTKFIGYGESLKDLNEFDLDLFLNKLFPEVEKI</sequence>
<feature type="chain" id="PRO_0000416699" description="Signal recognition particle receptor FtsY">
    <location>
        <begin position="1"/>
        <end position="290"/>
    </location>
</feature>
<feature type="binding site" evidence="1">
    <location>
        <begin position="91"/>
        <end position="98"/>
    </location>
    <ligand>
        <name>GTP</name>
        <dbReference type="ChEBI" id="CHEBI:37565"/>
    </ligand>
</feature>
<feature type="binding site" evidence="1">
    <location>
        <begin position="173"/>
        <end position="177"/>
    </location>
    <ligand>
        <name>GTP</name>
        <dbReference type="ChEBI" id="CHEBI:37565"/>
    </ligand>
</feature>
<feature type="binding site" evidence="1">
    <location>
        <begin position="237"/>
        <end position="240"/>
    </location>
    <ligand>
        <name>GTP</name>
        <dbReference type="ChEBI" id="CHEBI:37565"/>
    </ligand>
</feature>
<feature type="sequence variant" description="In strain: TW-183.">
    <original>R</original>
    <variation>W</variation>
    <location>
        <position position="48"/>
    </location>
</feature>
<dbReference type="EC" id="3.6.5.4" evidence="1"/>
<dbReference type="EMBL" id="AE001363">
    <property type="protein sequence ID" value="AAD19109.1"/>
    <property type="molecule type" value="Genomic_DNA"/>
</dbReference>
<dbReference type="EMBL" id="AE002161">
    <property type="protein sequence ID" value="AAF38675.1"/>
    <property type="molecule type" value="Genomic_DNA"/>
</dbReference>
<dbReference type="EMBL" id="BA000008">
    <property type="protein sequence ID" value="BAA99179.1"/>
    <property type="molecule type" value="Genomic_DNA"/>
</dbReference>
<dbReference type="EMBL" id="AE009440">
    <property type="protein sequence ID" value="AAP98937.1"/>
    <property type="molecule type" value="Genomic_DNA"/>
</dbReference>
<dbReference type="PIR" id="A86612">
    <property type="entry name" value="A86612"/>
</dbReference>
<dbReference type="PIR" id="B72013">
    <property type="entry name" value="B72013"/>
</dbReference>
<dbReference type="RefSeq" id="NP_225166.1">
    <property type="nucleotide sequence ID" value="NC_000922.1"/>
</dbReference>
<dbReference type="RefSeq" id="WP_010883605.1">
    <property type="nucleotide sequence ID" value="NZ_LN847257.1"/>
</dbReference>
<dbReference type="SMR" id="Q9Z6T7"/>
<dbReference type="STRING" id="406984.CPK_ORF00386"/>
<dbReference type="KEGG" id="cpa:CP_0887"/>
<dbReference type="KEGG" id="cpj:ftsY"/>
<dbReference type="KEGG" id="cpn:CPn_0972"/>
<dbReference type="KEGG" id="cpt:CpB1008"/>
<dbReference type="PATRIC" id="fig|115713.3.peg.1064"/>
<dbReference type="eggNOG" id="COG0552">
    <property type="taxonomic scope" value="Bacteria"/>
</dbReference>
<dbReference type="HOGENOM" id="CLU_009301_3_0_0"/>
<dbReference type="OMA" id="GISDQFQ"/>
<dbReference type="OrthoDB" id="9804720at2"/>
<dbReference type="Proteomes" id="UP000000583">
    <property type="component" value="Chromosome"/>
</dbReference>
<dbReference type="Proteomes" id="UP000000801">
    <property type="component" value="Chromosome"/>
</dbReference>
<dbReference type="GO" id="GO:0005737">
    <property type="term" value="C:cytoplasm"/>
    <property type="evidence" value="ECO:0007669"/>
    <property type="project" value="UniProtKB-SubCell"/>
</dbReference>
<dbReference type="GO" id="GO:0005886">
    <property type="term" value="C:plasma membrane"/>
    <property type="evidence" value="ECO:0007669"/>
    <property type="project" value="UniProtKB-SubCell"/>
</dbReference>
<dbReference type="GO" id="GO:0016887">
    <property type="term" value="F:ATP hydrolysis activity"/>
    <property type="evidence" value="ECO:0007669"/>
    <property type="project" value="InterPro"/>
</dbReference>
<dbReference type="GO" id="GO:0005525">
    <property type="term" value="F:GTP binding"/>
    <property type="evidence" value="ECO:0007669"/>
    <property type="project" value="UniProtKB-UniRule"/>
</dbReference>
<dbReference type="GO" id="GO:0003924">
    <property type="term" value="F:GTPase activity"/>
    <property type="evidence" value="ECO:0007669"/>
    <property type="project" value="UniProtKB-UniRule"/>
</dbReference>
<dbReference type="GO" id="GO:0005047">
    <property type="term" value="F:signal recognition particle binding"/>
    <property type="evidence" value="ECO:0007669"/>
    <property type="project" value="TreeGrafter"/>
</dbReference>
<dbReference type="GO" id="GO:0006614">
    <property type="term" value="P:SRP-dependent cotranslational protein targeting to membrane"/>
    <property type="evidence" value="ECO:0007669"/>
    <property type="project" value="InterPro"/>
</dbReference>
<dbReference type="CDD" id="cd17874">
    <property type="entry name" value="FtsY"/>
    <property type="match status" value="1"/>
</dbReference>
<dbReference type="Gene3D" id="3.40.50.300">
    <property type="entry name" value="P-loop containing nucleotide triphosphate hydrolases"/>
    <property type="match status" value="1"/>
</dbReference>
<dbReference type="Gene3D" id="1.20.120.140">
    <property type="entry name" value="Signal recognition particle SRP54, nucleotide-binding domain"/>
    <property type="match status" value="1"/>
</dbReference>
<dbReference type="HAMAP" id="MF_00920">
    <property type="entry name" value="FtsY"/>
    <property type="match status" value="1"/>
</dbReference>
<dbReference type="InterPro" id="IPR003593">
    <property type="entry name" value="AAA+_ATPase"/>
</dbReference>
<dbReference type="InterPro" id="IPR027417">
    <property type="entry name" value="P-loop_NTPase"/>
</dbReference>
<dbReference type="InterPro" id="IPR013822">
    <property type="entry name" value="Signal_recog_particl_SRP54_hlx"/>
</dbReference>
<dbReference type="InterPro" id="IPR004390">
    <property type="entry name" value="SR_rcpt_FtsY"/>
</dbReference>
<dbReference type="InterPro" id="IPR036225">
    <property type="entry name" value="SRP/SRP_N"/>
</dbReference>
<dbReference type="InterPro" id="IPR000897">
    <property type="entry name" value="SRP54_GTPase_dom"/>
</dbReference>
<dbReference type="InterPro" id="IPR042101">
    <property type="entry name" value="SRP54_N_sf"/>
</dbReference>
<dbReference type="NCBIfam" id="TIGR00064">
    <property type="entry name" value="ftsY"/>
    <property type="match status" value="1"/>
</dbReference>
<dbReference type="PANTHER" id="PTHR43134">
    <property type="entry name" value="SIGNAL RECOGNITION PARTICLE RECEPTOR SUBUNIT ALPHA"/>
    <property type="match status" value="1"/>
</dbReference>
<dbReference type="PANTHER" id="PTHR43134:SF1">
    <property type="entry name" value="SIGNAL RECOGNITION PARTICLE RECEPTOR SUBUNIT ALPHA"/>
    <property type="match status" value="1"/>
</dbReference>
<dbReference type="Pfam" id="PF00448">
    <property type="entry name" value="SRP54"/>
    <property type="match status" value="1"/>
</dbReference>
<dbReference type="Pfam" id="PF02881">
    <property type="entry name" value="SRP54_N"/>
    <property type="match status" value="1"/>
</dbReference>
<dbReference type="SMART" id="SM00382">
    <property type="entry name" value="AAA"/>
    <property type="match status" value="1"/>
</dbReference>
<dbReference type="SMART" id="SM00962">
    <property type="entry name" value="SRP54"/>
    <property type="match status" value="1"/>
</dbReference>
<dbReference type="SUPFAM" id="SSF47364">
    <property type="entry name" value="Domain of the SRP/SRP receptor G-proteins"/>
    <property type="match status" value="1"/>
</dbReference>
<dbReference type="SUPFAM" id="SSF52540">
    <property type="entry name" value="P-loop containing nucleoside triphosphate hydrolases"/>
    <property type="match status" value="1"/>
</dbReference>
<keyword id="KW-0997">Cell inner membrane</keyword>
<keyword id="KW-1003">Cell membrane</keyword>
<keyword id="KW-0963">Cytoplasm</keyword>
<keyword id="KW-0342">GTP-binding</keyword>
<keyword id="KW-0378">Hydrolase</keyword>
<keyword id="KW-0472">Membrane</keyword>
<keyword id="KW-0547">Nucleotide-binding</keyword>
<keyword id="KW-0675">Receptor</keyword>
<gene>
    <name evidence="1" type="primary">ftsY</name>
    <name type="ordered locus">CPn_0972</name>
    <name type="ordered locus">CP_0887</name>
    <name type="ordered locus">CpB1008</name>
</gene>
<organism>
    <name type="scientific">Chlamydia pneumoniae</name>
    <name type="common">Chlamydophila pneumoniae</name>
    <dbReference type="NCBI Taxonomy" id="83558"/>
    <lineage>
        <taxon>Bacteria</taxon>
        <taxon>Pseudomonadati</taxon>
        <taxon>Chlamydiota</taxon>
        <taxon>Chlamydiia</taxon>
        <taxon>Chlamydiales</taxon>
        <taxon>Chlamydiaceae</taxon>
        <taxon>Chlamydia/Chlamydophila group</taxon>
        <taxon>Chlamydia</taxon>
    </lineage>
</organism>
<evidence type="ECO:0000255" key="1">
    <source>
        <dbReference type="HAMAP-Rule" id="MF_00920"/>
    </source>
</evidence>
<protein>
    <recommendedName>
        <fullName evidence="1">Signal recognition particle receptor FtsY</fullName>
        <shortName evidence="1">SRP receptor</shortName>
        <ecNumber evidence="1">3.6.5.4</ecNumber>
    </recommendedName>
</protein>